<protein>
    <recommendedName>
        <fullName>Protein Jade-3</fullName>
    </recommendedName>
    <alternativeName>
        <fullName>Jade family PHD finger protein 3</fullName>
    </alternativeName>
    <alternativeName>
        <fullName>PHD finger protein 16</fullName>
    </alternativeName>
</protein>
<name>JADE3_HUMAN</name>
<accession>Q92613</accession>
<accession>Q6IE79</accession>
<reference key="1">
    <citation type="journal article" date="2000" name="J. Steroid Biochem. Mol. Biol.">
        <title>Identification of human estrogen-inducible transcripts that potentially mediate the apoptotic response in breast cancer.</title>
        <authorList>
            <person name="Szelei J."/>
            <person name="Soto A.M."/>
            <person name="Geck P."/>
            <person name="Desronvil M."/>
            <person name="Prechtl N.V."/>
            <person name="Weill B.C."/>
            <person name="Sonnenschein C."/>
        </authorList>
    </citation>
    <scope>NUCLEOTIDE SEQUENCE [MRNA]</scope>
    <scope>TISSUE SPECIFICITY</scope>
    <scope>INDUCTION BY ESTRADIOL</scope>
</reference>
<reference key="2">
    <citation type="journal article" date="1996" name="DNA Res.">
        <title>Prediction of the coding sequences of unidentified human genes. VI. The coding sequences of 80 new genes (KIAA0201-KIAA0280) deduced by analysis of cDNA clones from cell line KG-1 and brain.</title>
        <authorList>
            <person name="Nagase T."/>
            <person name="Seki N."/>
            <person name="Ishikawa K."/>
            <person name="Ohira M."/>
            <person name="Kawarabayasi Y."/>
            <person name="Ohara O."/>
            <person name="Tanaka A."/>
            <person name="Kotani H."/>
            <person name="Miyajima N."/>
            <person name="Nomura N."/>
        </authorList>
    </citation>
    <scope>NUCLEOTIDE SEQUENCE [LARGE SCALE MRNA]</scope>
    <source>
        <tissue>Bone marrow</tissue>
    </source>
</reference>
<reference key="3">
    <citation type="journal article" date="2005" name="Nature">
        <title>The DNA sequence of the human X chromosome.</title>
        <authorList>
            <person name="Ross M.T."/>
            <person name="Grafham D.V."/>
            <person name="Coffey A.J."/>
            <person name="Scherer S."/>
            <person name="McLay K."/>
            <person name="Muzny D."/>
            <person name="Platzer M."/>
            <person name="Howell G.R."/>
            <person name="Burrows C."/>
            <person name="Bird C.P."/>
            <person name="Frankish A."/>
            <person name="Lovell F.L."/>
            <person name="Howe K.L."/>
            <person name="Ashurst J.L."/>
            <person name="Fulton R.S."/>
            <person name="Sudbrak R."/>
            <person name="Wen G."/>
            <person name="Jones M.C."/>
            <person name="Hurles M.E."/>
            <person name="Andrews T.D."/>
            <person name="Scott C.E."/>
            <person name="Searle S."/>
            <person name="Ramser J."/>
            <person name="Whittaker A."/>
            <person name="Deadman R."/>
            <person name="Carter N.P."/>
            <person name="Hunt S.E."/>
            <person name="Chen R."/>
            <person name="Cree A."/>
            <person name="Gunaratne P."/>
            <person name="Havlak P."/>
            <person name="Hodgson A."/>
            <person name="Metzker M.L."/>
            <person name="Richards S."/>
            <person name="Scott G."/>
            <person name="Steffen D."/>
            <person name="Sodergren E."/>
            <person name="Wheeler D.A."/>
            <person name="Worley K.C."/>
            <person name="Ainscough R."/>
            <person name="Ambrose K.D."/>
            <person name="Ansari-Lari M.A."/>
            <person name="Aradhya S."/>
            <person name="Ashwell R.I."/>
            <person name="Babbage A.K."/>
            <person name="Bagguley C.L."/>
            <person name="Ballabio A."/>
            <person name="Banerjee R."/>
            <person name="Barker G.E."/>
            <person name="Barlow K.F."/>
            <person name="Barrett I.P."/>
            <person name="Bates K.N."/>
            <person name="Beare D.M."/>
            <person name="Beasley H."/>
            <person name="Beasley O."/>
            <person name="Beck A."/>
            <person name="Bethel G."/>
            <person name="Blechschmidt K."/>
            <person name="Brady N."/>
            <person name="Bray-Allen S."/>
            <person name="Bridgeman A.M."/>
            <person name="Brown A.J."/>
            <person name="Brown M.J."/>
            <person name="Bonnin D."/>
            <person name="Bruford E.A."/>
            <person name="Buhay C."/>
            <person name="Burch P."/>
            <person name="Burford D."/>
            <person name="Burgess J."/>
            <person name="Burrill W."/>
            <person name="Burton J."/>
            <person name="Bye J.M."/>
            <person name="Carder C."/>
            <person name="Carrel L."/>
            <person name="Chako J."/>
            <person name="Chapman J.C."/>
            <person name="Chavez D."/>
            <person name="Chen E."/>
            <person name="Chen G."/>
            <person name="Chen Y."/>
            <person name="Chen Z."/>
            <person name="Chinault C."/>
            <person name="Ciccodicola A."/>
            <person name="Clark S.Y."/>
            <person name="Clarke G."/>
            <person name="Clee C.M."/>
            <person name="Clegg S."/>
            <person name="Clerc-Blankenburg K."/>
            <person name="Clifford K."/>
            <person name="Cobley V."/>
            <person name="Cole C.G."/>
            <person name="Conquer J.S."/>
            <person name="Corby N."/>
            <person name="Connor R.E."/>
            <person name="David R."/>
            <person name="Davies J."/>
            <person name="Davis C."/>
            <person name="Davis J."/>
            <person name="Delgado O."/>
            <person name="Deshazo D."/>
            <person name="Dhami P."/>
            <person name="Ding Y."/>
            <person name="Dinh H."/>
            <person name="Dodsworth S."/>
            <person name="Draper H."/>
            <person name="Dugan-Rocha S."/>
            <person name="Dunham A."/>
            <person name="Dunn M."/>
            <person name="Durbin K.J."/>
            <person name="Dutta I."/>
            <person name="Eades T."/>
            <person name="Ellwood M."/>
            <person name="Emery-Cohen A."/>
            <person name="Errington H."/>
            <person name="Evans K.L."/>
            <person name="Faulkner L."/>
            <person name="Francis F."/>
            <person name="Frankland J."/>
            <person name="Fraser A.E."/>
            <person name="Galgoczy P."/>
            <person name="Gilbert J."/>
            <person name="Gill R."/>
            <person name="Gloeckner G."/>
            <person name="Gregory S.G."/>
            <person name="Gribble S."/>
            <person name="Griffiths C."/>
            <person name="Grocock R."/>
            <person name="Gu Y."/>
            <person name="Gwilliam R."/>
            <person name="Hamilton C."/>
            <person name="Hart E.A."/>
            <person name="Hawes A."/>
            <person name="Heath P.D."/>
            <person name="Heitmann K."/>
            <person name="Hennig S."/>
            <person name="Hernandez J."/>
            <person name="Hinzmann B."/>
            <person name="Ho S."/>
            <person name="Hoffs M."/>
            <person name="Howden P.J."/>
            <person name="Huckle E.J."/>
            <person name="Hume J."/>
            <person name="Hunt P.J."/>
            <person name="Hunt A.R."/>
            <person name="Isherwood J."/>
            <person name="Jacob L."/>
            <person name="Johnson D."/>
            <person name="Jones S."/>
            <person name="de Jong P.J."/>
            <person name="Joseph S.S."/>
            <person name="Keenan S."/>
            <person name="Kelly S."/>
            <person name="Kershaw J.K."/>
            <person name="Khan Z."/>
            <person name="Kioschis P."/>
            <person name="Klages S."/>
            <person name="Knights A.J."/>
            <person name="Kosiura A."/>
            <person name="Kovar-Smith C."/>
            <person name="Laird G.K."/>
            <person name="Langford C."/>
            <person name="Lawlor S."/>
            <person name="Leversha M."/>
            <person name="Lewis L."/>
            <person name="Liu W."/>
            <person name="Lloyd C."/>
            <person name="Lloyd D.M."/>
            <person name="Loulseged H."/>
            <person name="Loveland J.E."/>
            <person name="Lovell J.D."/>
            <person name="Lozado R."/>
            <person name="Lu J."/>
            <person name="Lyne R."/>
            <person name="Ma J."/>
            <person name="Maheshwari M."/>
            <person name="Matthews L.H."/>
            <person name="McDowall J."/>
            <person name="McLaren S."/>
            <person name="McMurray A."/>
            <person name="Meidl P."/>
            <person name="Meitinger T."/>
            <person name="Milne S."/>
            <person name="Miner G."/>
            <person name="Mistry S.L."/>
            <person name="Morgan M."/>
            <person name="Morris S."/>
            <person name="Mueller I."/>
            <person name="Mullikin J.C."/>
            <person name="Nguyen N."/>
            <person name="Nordsiek G."/>
            <person name="Nyakatura G."/>
            <person name="O'dell C.N."/>
            <person name="Okwuonu G."/>
            <person name="Palmer S."/>
            <person name="Pandian R."/>
            <person name="Parker D."/>
            <person name="Parrish J."/>
            <person name="Pasternak S."/>
            <person name="Patel D."/>
            <person name="Pearce A.V."/>
            <person name="Pearson D.M."/>
            <person name="Pelan S.E."/>
            <person name="Perez L."/>
            <person name="Porter K.M."/>
            <person name="Ramsey Y."/>
            <person name="Reichwald K."/>
            <person name="Rhodes S."/>
            <person name="Ridler K.A."/>
            <person name="Schlessinger D."/>
            <person name="Schueler M.G."/>
            <person name="Sehra H.K."/>
            <person name="Shaw-Smith C."/>
            <person name="Shen H."/>
            <person name="Sheridan E.M."/>
            <person name="Shownkeen R."/>
            <person name="Skuce C.D."/>
            <person name="Smith M.L."/>
            <person name="Sotheran E.C."/>
            <person name="Steingruber H.E."/>
            <person name="Steward C.A."/>
            <person name="Storey R."/>
            <person name="Swann R.M."/>
            <person name="Swarbreck D."/>
            <person name="Tabor P.E."/>
            <person name="Taudien S."/>
            <person name="Taylor T."/>
            <person name="Teague B."/>
            <person name="Thomas K."/>
            <person name="Thorpe A."/>
            <person name="Timms K."/>
            <person name="Tracey A."/>
            <person name="Trevanion S."/>
            <person name="Tromans A.C."/>
            <person name="d'Urso M."/>
            <person name="Verduzco D."/>
            <person name="Villasana D."/>
            <person name="Waldron L."/>
            <person name="Wall M."/>
            <person name="Wang Q."/>
            <person name="Warren J."/>
            <person name="Warry G.L."/>
            <person name="Wei X."/>
            <person name="West A."/>
            <person name="Whitehead S.L."/>
            <person name="Whiteley M.N."/>
            <person name="Wilkinson J.E."/>
            <person name="Willey D.L."/>
            <person name="Williams G."/>
            <person name="Williams L."/>
            <person name="Williamson A."/>
            <person name="Williamson H."/>
            <person name="Wilming L."/>
            <person name="Woodmansey R.L."/>
            <person name="Wray P.W."/>
            <person name="Yen J."/>
            <person name="Zhang J."/>
            <person name="Zhou J."/>
            <person name="Zoghbi H."/>
            <person name="Zorilla S."/>
            <person name="Buck D."/>
            <person name="Reinhardt R."/>
            <person name="Poustka A."/>
            <person name="Rosenthal A."/>
            <person name="Lehrach H."/>
            <person name="Meindl A."/>
            <person name="Minx P.J."/>
            <person name="Hillier L.W."/>
            <person name="Willard H.F."/>
            <person name="Wilson R.K."/>
            <person name="Waterston R.H."/>
            <person name="Rice C.M."/>
            <person name="Vaudin M."/>
            <person name="Coulson A."/>
            <person name="Nelson D.L."/>
            <person name="Weinstock G."/>
            <person name="Sulston J.E."/>
            <person name="Durbin R.M."/>
            <person name="Hubbard T."/>
            <person name="Gibbs R.A."/>
            <person name="Beck S."/>
            <person name="Rogers J."/>
            <person name="Bentley D.R."/>
        </authorList>
    </citation>
    <scope>NUCLEOTIDE SEQUENCE [LARGE SCALE GENOMIC DNA]</scope>
</reference>
<reference key="4">
    <citation type="journal article" date="2004" name="Genome Res.">
        <title>The status, quality, and expansion of the NIH full-length cDNA project: the Mammalian Gene Collection (MGC).</title>
        <authorList>
            <consortium name="The MGC Project Team"/>
        </authorList>
    </citation>
    <scope>NUCLEOTIDE SEQUENCE [LARGE SCALE MRNA]</scope>
</reference>
<reference key="5">
    <citation type="journal article" date="2003" name="Mol. Cell. Biol.">
        <title>Identification of Jade1, a gene encoding a PHD zinc finger protein, in a gene trap mutagenesis screen for genes involved in anteroposterior axis development.</title>
        <authorList>
            <person name="Tzouanacou E."/>
            <person name="Tweedie S."/>
            <person name="Wilson V."/>
        </authorList>
    </citation>
    <scope>IDENTIFICATION</scope>
</reference>
<reference key="6">
    <citation type="journal article" date="2006" name="Cell">
        <title>Global, in vivo, and site-specific phosphorylation dynamics in signaling networks.</title>
        <authorList>
            <person name="Olsen J.V."/>
            <person name="Blagoev B."/>
            <person name="Gnad F."/>
            <person name="Macek B."/>
            <person name="Kumar C."/>
            <person name="Mortensen P."/>
            <person name="Mann M."/>
        </authorList>
    </citation>
    <scope>PHOSPHORYLATION [LARGE SCALE ANALYSIS] AT SER-566</scope>
    <scope>IDENTIFICATION BY MASS SPECTROMETRY [LARGE SCALE ANALYSIS]</scope>
    <source>
        <tissue>Cervix carcinoma</tissue>
    </source>
</reference>
<reference key="7">
    <citation type="journal article" date="2006" name="Mol. Cell">
        <title>ING tumor suppressor proteins are critical regulators of chromatin acetylation required for genome expression and perpetuation.</title>
        <authorList>
            <person name="Doyon Y."/>
            <person name="Cayrou C."/>
            <person name="Ullah M."/>
            <person name="Landry A.-J."/>
            <person name="Cote V."/>
            <person name="Selleck W."/>
            <person name="Lane W.S."/>
            <person name="Tan S."/>
            <person name="Yang X.-J."/>
            <person name="Cote J."/>
        </authorList>
    </citation>
    <scope>FUNCTION IN HISTONE H4 ACETYLATION</scope>
    <scope>IDENTIFICATION BY MASS SPECTROMETRY</scope>
    <scope>IDENTIFICATION IN THE HBO1 COMPLEX</scope>
</reference>
<reference key="8">
    <citation type="journal article" date="2006" name="Nat. Biotechnol.">
        <title>A probability-based approach for high-throughput protein phosphorylation analysis and site localization.</title>
        <authorList>
            <person name="Beausoleil S.A."/>
            <person name="Villen J."/>
            <person name="Gerber S.A."/>
            <person name="Rush J."/>
            <person name="Gygi S.P."/>
        </authorList>
    </citation>
    <scope>IDENTIFICATION BY MASS SPECTROMETRY [LARGE SCALE ANALYSIS]</scope>
    <source>
        <tissue>Cervix carcinoma</tissue>
    </source>
</reference>
<reference key="9">
    <citation type="journal article" date="2008" name="J. Proteome Res.">
        <title>Combining protein-based IMAC, peptide-based IMAC, and MudPIT for efficient phosphoproteomic analysis.</title>
        <authorList>
            <person name="Cantin G.T."/>
            <person name="Yi W."/>
            <person name="Lu B."/>
            <person name="Park S.K."/>
            <person name="Xu T."/>
            <person name="Lee J.-D."/>
            <person name="Yates J.R. III"/>
        </authorList>
    </citation>
    <scope>PHOSPHORYLATION [LARGE SCALE ANALYSIS] AT SER-85 AND SER-566</scope>
    <scope>IDENTIFICATION BY MASS SPECTROMETRY [LARGE SCALE ANALYSIS]</scope>
    <source>
        <tissue>Cervix carcinoma</tissue>
    </source>
</reference>
<reference key="10">
    <citation type="journal article" date="2008" name="Proc. Natl. Acad. Sci. U.S.A.">
        <title>A quantitative atlas of mitotic phosphorylation.</title>
        <authorList>
            <person name="Dephoure N."/>
            <person name="Zhou C."/>
            <person name="Villen J."/>
            <person name="Beausoleil S.A."/>
            <person name="Bakalarski C.E."/>
            <person name="Elledge S.J."/>
            <person name="Gygi S.P."/>
        </authorList>
    </citation>
    <scope>PHOSPHORYLATION [LARGE SCALE ANALYSIS] AT SER-774; SER-776 AND SER-780</scope>
    <scope>IDENTIFICATION BY MASS SPECTROMETRY [LARGE SCALE ANALYSIS]</scope>
    <source>
        <tissue>Cervix carcinoma</tissue>
    </source>
</reference>
<reference key="11">
    <citation type="journal article" date="2009" name="Anal. Chem.">
        <title>Lys-N and trypsin cover complementary parts of the phosphoproteome in a refined SCX-based approach.</title>
        <authorList>
            <person name="Gauci S."/>
            <person name="Helbig A.O."/>
            <person name="Slijper M."/>
            <person name="Krijgsveld J."/>
            <person name="Heck A.J."/>
            <person name="Mohammed S."/>
        </authorList>
    </citation>
    <scope>IDENTIFICATION BY MASS SPECTROMETRY [LARGE SCALE ANALYSIS]</scope>
</reference>
<reference key="12">
    <citation type="journal article" date="2009" name="Sci. Signal.">
        <title>Quantitative phosphoproteomic analysis of T cell receptor signaling reveals system-wide modulation of protein-protein interactions.</title>
        <authorList>
            <person name="Mayya V."/>
            <person name="Lundgren D.H."/>
            <person name="Hwang S.-I."/>
            <person name="Rezaul K."/>
            <person name="Wu L."/>
            <person name="Eng J.K."/>
            <person name="Rodionov V."/>
            <person name="Han D.K."/>
        </authorList>
    </citation>
    <scope>PHOSPHORYLATION [LARGE SCALE ANALYSIS] AT SER-85</scope>
    <scope>IDENTIFICATION BY MASS SPECTROMETRY [LARGE SCALE ANALYSIS]</scope>
    <source>
        <tissue>Leukemic T-cell</tissue>
    </source>
</reference>
<reference key="13">
    <citation type="journal article" date="2009" name="Science">
        <title>Lysine acetylation targets protein complexes and co-regulates major cellular functions.</title>
        <authorList>
            <person name="Choudhary C."/>
            <person name="Kumar C."/>
            <person name="Gnad F."/>
            <person name="Nielsen M.L."/>
            <person name="Rehman M."/>
            <person name="Walther T.C."/>
            <person name="Olsen J.V."/>
            <person name="Mann M."/>
        </authorList>
    </citation>
    <scope>ACETYLATION [LARGE SCALE ANALYSIS] AT LYS-30; LYS-32 AND LYS-638</scope>
    <scope>IDENTIFICATION BY MASS SPECTROMETRY [LARGE SCALE ANALYSIS]</scope>
</reference>
<reference key="14">
    <citation type="journal article" date="2010" name="Sci. Signal.">
        <title>Quantitative phosphoproteomics reveals widespread full phosphorylation site occupancy during mitosis.</title>
        <authorList>
            <person name="Olsen J.V."/>
            <person name="Vermeulen M."/>
            <person name="Santamaria A."/>
            <person name="Kumar C."/>
            <person name="Miller M.L."/>
            <person name="Jensen L.J."/>
            <person name="Gnad F."/>
            <person name="Cox J."/>
            <person name="Jensen T.S."/>
            <person name="Nigg E.A."/>
            <person name="Brunak S."/>
            <person name="Mann M."/>
        </authorList>
    </citation>
    <scope>PHOSPHORYLATION [LARGE SCALE ANALYSIS] AT SER-566</scope>
    <scope>IDENTIFICATION BY MASS SPECTROMETRY [LARGE SCALE ANALYSIS]</scope>
    <source>
        <tissue>Cervix carcinoma</tissue>
    </source>
</reference>
<reference key="15">
    <citation type="journal article" date="2011" name="Sci. Signal.">
        <title>System-wide temporal characterization of the proteome and phosphoproteome of human embryonic stem cell differentiation.</title>
        <authorList>
            <person name="Rigbolt K.T."/>
            <person name="Prokhorova T.A."/>
            <person name="Akimov V."/>
            <person name="Henningsen J."/>
            <person name="Johansen P.T."/>
            <person name="Kratchmarova I."/>
            <person name="Kassem M."/>
            <person name="Mann M."/>
            <person name="Olsen J.V."/>
            <person name="Blagoev B."/>
        </authorList>
    </citation>
    <scope>PHOSPHORYLATION [LARGE SCALE ANALYSIS] AT SER-566</scope>
    <scope>IDENTIFICATION BY MASS SPECTROMETRY [LARGE SCALE ANALYSIS]</scope>
</reference>
<reference key="16">
    <citation type="journal article" date="2013" name="J. Proteome Res.">
        <title>Toward a comprehensive characterization of a human cancer cell phosphoproteome.</title>
        <authorList>
            <person name="Zhou H."/>
            <person name="Di Palma S."/>
            <person name="Preisinger C."/>
            <person name="Peng M."/>
            <person name="Polat A.N."/>
            <person name="Heck A.J."/>
            <person name="Mohammed S."/>
        </authorList>
    </citation>
    <scope>PHOSPHORYLATION [LARGE SCALE ANALYSIS] AT SER-85; SER-566 AND SER-608</scope>
    <scope>IDENTIFICATION BY MASS SPECTROMETRY [LARGE SCALE ANALYSIS]</scope>
    <source>
        <tissue>Cervix carcinoma</tissue>
        <tissue>Erythroleukemia</tissue>
    </source>
</reference>
<keyword id="KW-0007">Acetylation</keyword>
<keyword id="KW-0479">Metal-binding</keyword>
<keyword id="KW-0597">Phosphoprotein</keyword>
<keyword id="KW-1267">Proteomics identification</keyword>
<keyword id="KW-1185">Reference proteome</keyword>
<keyword id="KW-0677">Repeat</keyword>
<keyword id="KW-0862">Zinc</keyword>
<keyword id="KW-0863">Zinc-finger</keyword>
<gene>
    <name type="primary">JADE3</name>
    <name type="synonym">KIAA0215</name>
    <name type="synonym">PHF16</name>
</gene>
<dbReference type="EMBL" id="AF127774">
    <property type="protein sequence ID" value="AAD51905.1"/>
    <property type="molecule type" value="mRNA"/>
</dbReference>
<dbReference type="EMBL" id="D86969">
    <property type="protein sequence ID" value="BAA13205.2"/>
    <property type="status" value="ALT_INIT"/>
    <property type="molecule type" value="mRNA"/>
</dbReference>
<dbReference type="EMBL" id="Z83822">
    <property type="status" value="NOT_ANNOTATED_CDS"/>
    <property type="molecule type" value="Genomic_DNA"/>
</dbReference>
<dbReference type="EMBL" id="BC114487">
    <property type="protein sequence ID" value="AAI14488.1"/>
    <property type="molecule type" value="mRNA"/>
</dbReference>
<dbReference type="EMBL" id="BC113880">
    <property type="protein sequence ID" value="AAI13881.1"/>
    <property type="molecule type" value="mRNA"/>
</dbReference>
<dbReference type="EMBL" id="BN000289">
    <property type="protein sequence ID" value="CAE30502.1"/>
    <property type="molecule type" value="mRNA"/>
</dbReference>
<dbReference type="CCDS" id="CCDS14271.1"/>
<dbReference type="RefSeq" id="NP_001070913.1">
    <property type="nucleotide sequence ID" value="NM_001077445.3"/>
</dbReference>
<dbReference type="RefSeq" id="NP_055550.1">
    <property type="nucleotide sequence ID" value="NM_014735.5"/>
</dbReference>
<dbReference type="SMR" id="Q92613"/>
<dbReference type="BioGRID" id="115113">
    <property type="interactions" value="54"/>
</dbReference>
<dbReference type="ComplexPortal" id="CPX-720">
    <property type="entry name" value="HBO1-4.3 histone acetyltransferase complex"/>
</dbReference>
<dbReference type="ComplexPortal" id="CPX-723">
    <property type="entry name" value="HBO1-5.3 histone acetyltransferase complex"/>
</dbReference>
<dbReference type="CORUM" id="Q92613"/>
<dbReference type="FunCoup" id="Q92613">
    <property type="interactions" value="763"/>
</dbReference>
<dbReference type="IntAct" id="Q92613">
    <property type="interactions" value="30"/>
</dbReference>
<dbReference type="MINT" id="Q92613"/>
<dbReference type="STRING" id="9606.ENSP00000481850"/>
<dbReference type="iPTMnet" id="Q92613"/>
<dbReference type="PhosphoSitePlus" id="Q92613"/>
<dbReference type="BioMuta" id="JADE3"/>
<dbReference type="DMDM" id="34098663"/>
<dbReference type="jPOST" id="Q92613"/>
<dbReference type="MassIVE" id="Q92613"/>
<dbReference type="PaxDb" id="9606-ENSP00000481850"/>
<dbReference type="PeptideAtlas" id="Q92613"/>
<dbReference type="ProteomicsDB" id="75357"/>
<dbReference type="Pumba" id="Q92613"/>
<dbReference type="Antibodypedia" id="416">
    <property type="antibodies" value="108 antibodies from 20 providers"/>
</dbReference>
<dbReference type="DNASU" id="9767"/>
<dbReference type="Ensembl" id="ENST00000611250.4">
    <property type="protein sequence ID" value="ENSP00000479377.1"/>
    <property type="gene ID" value="ENSG00000102221.14"/>
</dbReference>
<dbReference type="Ensembl" id="ENST00000614628.5">
    <property type="protein sequence ID" value="ENSP00000481850.1"/>
    <property type="gene ID" value="ENSG00000102221.14"/>
</dbReference>
<dbReference type="GeneID" id="9767"/>
<dbReference type="KEGG" id="hsa:9767"/>
<dbReference type="MANE-Select" id="ENST00000614628.5">
    <property type="protein sequence ID" value="ENSP00000481850.1"/>
    <property type="RefSeq nucleotide sequence ID" value="NM_014735.5"/>
    <property type="RefSeq protein sequence ID" value="NP_055550.1"/>
</dbReference>
<dbReference type="UCSC" id="uc033ebv.1">
    <property type="organism name" value="human"/>
</dbReference>
<dbReference type="AGR" id="HGNC:22982"/>
<dbReference type="CTD" id="9767"/>
<dbReference type="DisGeNET" id="9767"/>
<dbReference type="GeneCards" id="JADE3"/>
<dbReference type="HGNC" id="HGNC:22982">
    <property type="gene designation" value="JADE3"/>
</dbReference>
<dbReference type="HPA" id="ENSG00000102221">
    <property type="expression patterns" value="Low tissue specificity"/>
</dbReference>
<dbReference type="MIM" id="300618">
    <property type="type" value="gene"/>
</dbReference>
<dbReference type="neXtProt" id="NX_Q92613"/>
<dbReference type="OpenTargets" id="ENSG00000102221"/>
<dbReference type="PharmGKB" id="PA134993233"/>
<dbReference type="VEuPathDB" id="HostDB:ENSG00000102221"/>
<dbReference type="eggNOG" id="KOG0954">
    <property type="taxonomic scope" value="Eukaryota"/>
</dbReference>
<dbReference type="GeneTree" id="ENSGT00940000158722"/>
<dbReference type="HOGENOM" id="CLU_016215_1_0_1"/>
<dbReference type="InParanoid" id="Q92613"/>
<dbReference type="OMA" id="MFCDQES"/>
<dbReference type="OrthoDB" id="20839at2759"/>
<dbReference type="PAN-GO" id="Q92613">
    <property type="GO annotations" value="2 GO annotations based on evolutionary models"/>
</dbReference>
<dbReference type="PhylomeDB" id="Q92613"/>
<dbReference type="TreeFam" id="TF316118"/>
<dbReference type="PathwayCommons" id="Q92613"/>
<dbReference type="Reactome" id="R-HSA-3214847">
    <property type="pathway name" value="HATs acetylate histones"/>
</dbReference>
<dbReference type="SignaLink" id="Q92613"/>
<dbReference type="BioGRID-ORCS" id="9767">
    <property type="hits" value="24 hits in 795 CRISPR screens"/>
</dbReference>
<dbReference type="ChiTaRS" id="JADE3">
    <property type="organism name" value="human"/>
</dbReference>
<dbReference type="GeneWiki" id="PHF16"/>
<dbReference type="GenomeRNAi" id="9767"/>
<dbReference type="Pharos" id="Q92613">
    <property type="development level" value="Tbio"/>
</dbReference>
<dbReference type="PRO" id="PR:Q92613"/>
<dbReference type="Proteomes" id="UP000005640">
    <property type="component" value="Chromosome X"/>
</dbReference>
<dbReference type="RNAct" id="Q92613">
    <property type="molecule type" value="protein"/>
</dbReference>
<dbReference type="Bgee" id="ENSG00000102221">
    <property type="expression patterns" value="Expressed in corpus epididymis and 156 other cell types or tissues"/>
</dbReference>
<dbReference type="ExpressionAtlas" id="Q92613">
    <property type="expression patterns" value="baseline and differential"/>
</dbReference>
<dbReference type="GO" id="GO:0000123">
    <property type="term" value="C:histone acetyltransferase complex"/>
    <property type="evidence" value="ECO:0000314"/>
    <property type="project" value="UniProtKB"/>
</dbReference>
<dbReference type="GO" id="GO:0005654">
    <property type="term" value="C:nucleoplasm"/>
    <property type="evidence" value="ECO:0000314"/>
    <property type="project" value="ComplexPortal"/>
</dbReference>
<dbReference type="GO" id="GO:0008270">
    <property type="term" value="F:zinc ion binding"/>
    <property type="evidence" value="ECO:0007669"/>
    <property type="project" value="UniProtKB-KW"/>
</dbReference>
<dbReference type="GO" id="GO:0051726">
    <property type="term" value="P:regulation of cell cycle"/>
    <property type="evidence" value="ECO:0000314"/>
    <property type="project" value="ComplexPortal"/>
</dbReference>
<dbReference type="GO" id="GO:0001558">
    <property type="term" value="P:regulation of cell growth"/>
    <property type="evidence" value="ECO:0000250"/>
    <property type="project" value="ComplexPortal"/>
</dbReference>
<dbReference type="GO" id="GO:2000278">
    <property type="term" value="P:regulation of DNA biosynthetic process"/>
    <property type="evidence" value="ECO:0000314"/>
    <property type="project" value="ComplexPortal"/>
</dbReference>
<dbReference type="GO" id="GO:0006275">
    <property type="term" value="P:regulation of DNA replication"/>
    <property type="evidence" value="ECO:0000314"/>
    <property type="project" value="ComplexPortal"/>
</dbReference>
<dbReference type="GO" id="GO:0006355">
    <property type="term" value="P:regulation of DNA-templated transcription"/>
    <property type="evidence" value="ECO:0000250"/>
    <property type="project" value="ComplexPortal"/>
</dbReference>
<dbReference type="GO" id="GO:0006357">
    <property type="term" value="P:regulation of transcription by RNA polymerase II"/>
    <property type="evidence" value="ECO:0000318"/>
    <property type="project" value="GO_Central"/>
</dbReference>
<dbReference type="CDD" id="cd15706">
    <property type="entry name" value="ePHD_JADE3"/>
    <property type="match status" value="1"/>
</dbReference>
<dbReference type="CDD" id="cd15681">
    <property type="entry name" value="PHD_JADE3"/>
    <property type="match status" value="1"/>
</dbReference>
<dbReference type="FunFam" id="3.30.40.10:FF:000004">
    <property type="entry name" value="Jade family PHD finger 2"/>
    <property type="match status" value="1"/>
</dbReference>
<dbReference type="FunFam" id="3.30.40.10:FF:000030">
    <property type="entry name" value="Protein Jade-1 isoform 1"/>
    <property type="match status" value="1"/>
</dbReference>
<dbReference type="Gene3D" id="3.30.40.10">
    <property type="entry name" value="Zinc/RING finger domain, C3HC4 (zinc finger)"/>
    <property type="match status" value="2"/>
</dbReference>
<dbReference type="InterPro" id="IPR019542">
    <property type="entry name" value="Enhancer_polycomb-like_N"/>
</dbReference>
<dbReference type="InterPro" id="IPR034732">
    <property type="entry name" value="EPHD"/>
</dbReference>
<dbReference type="InterPro" id="IPR050701">
    <property type="entry name" value="Histone_Mod_Regulator"/>
</dbReference>
<dbReference type="InterPro" id="IPR039550">
    <property type="entry name" value="JADE3_PHD"/>
</dbReference>
<dbReference type="InterPro" id="IPR019786">
    <property type="entry name" value="Zinc_finger_PHD-type_CS"/>
</dbReference>
<dbReference type="InterPro" id="IPR011011">
    <property type="entry name" value="Znf_FYVE_PHD"/>
</dbReference>
<dbReference type="InterPro" id="IPR001965">
    <property type="entry name" value="Znf_PHD"/>
</dbReference>
<dbReference type="InterPro" id="IPR019787">
    <property type="entry name" value="Znf_PHD-finger"/>
</dbReference>
<dbReference type="InterPro" id="IPR013083">
    <property type="entry name" value="Znf_RING/FYVE/PHD"/>
</dbReference>
<dbReference type="PANTHER" id="PTHR13793">
    <property type="entry name" value="PHD FINGER PROTEINS"/>
    <property type="match status" value="1"/>
</dbReference>
<dbReference type="PANTHER" id="PTHR13793:SF27">
    <property type="entry name" value="PROTEIN JADE-3"/>
    <property type="match status" value="1"/>
</dbReference>
<dbReference type="Pfam" id="PF10513">
    <property type="entry name" value="EPL1"/>
    <property type="match status" value="1"/>
</dbReference>
<dbReference type="Pfam" id="PF13831">
    <property type="entry name" value="PHD_2"/>
    <property type="match status" value="1"/>
</dbReference>
<dbReference type="Pfam" id="PF13832">
    <property type="entry name" value="zf-HC5HC2H_2"/>
    <property type="match status" value="1"/>
</dbReference>
<dbReference type="SMART" id="SM00249">
    <property type="entry name" value="PHD"/>
    <property type="match status" value="2"/>
</dbReference>
<dbReference type="SUPFAM" id="SSF57903">
    <property type="entry name" value="FYVE/PHD zinc finger"/>
    <property type="match status" value="1"/>
</dbReference>
<dbReference type="PROSITE" id="PS51805">
    <property type="entry name" value="EPHD"/>
    <property type="match status" value="1"/>
</dbReference>
<dbReference type="PROSITE" id="PS01359">
    <property type="entry name" value="ZF_PHD_1"/>
    <property type="match status" value="1"/>
</dbReference>
<dbReference type="PROSITE" id="PS50016">
    <property type="entry name" value="ZF_PHD_2"/>
    <property type="match status" value="1"/>
</dbReference>
<proteinExistence type="evidence at protein level"/>
<organism>
    <name type="scientific">Homo sapiens</name>
    <name type="common">Human</name>
    <dbReference type="NCBI Taxonomy" id="9606"/>
    <lineage>
        <taxon>Eukaryota</taxon>
        <taxon>Metazoa</taxon>
        <taxon>Chordata</taxon>
        <taxon>Craniata</taxon>
        <taxon>Vertebrata</taxon>
        <taxon>Euteleostomi</taxon>
        <taxon>Mammalia</taxon>
        <taxon>Eutheria</taxon>
        <taxon>Euarchontoglires</taxon>
        <taxon>Primates</taxon>
        <taxon>Haplorrhini</taxon>
        <taxon>Catarrhini</taxon>
        <taxon>Hominidae</taxon>
        <taxon>Homo</taxon>
    </lineage>
</organism>
<feature type="chain" id="PRO_0000059309" description="Protein Jade-3">
    <location>
        <begin position="1"/>
        <end position="823"/>
    </location>
</feature>
<feature type="zinc finger region" description="PHD-type 1" evidence="2">
    <location>
        <begin position="200"/>
        <end position="250"/>
    </location>
</feature>
<feature type="zinc finger region" description="C2HC pre-PHD-type" evidence="3">
    <location>
        <begin position="252"/>
        <end position="286"/>
    </location>
</feature>
<feature type="zinc finger region" description="PHD-type 2" evidence="3">
    <location>
        <begin position="310"/>
        <end position="366"/>
    </location>
</feature>
<feature type="region of interest" description="Disordered" evidence="4">
    <location>
        <begin position="1"/>
        <end position="32"/>
    </location>
</feature>
<feature type="region of interest" description="Disordered" evidence="4">
    <location>
        <begin position="372"/>
        <end position="395"/>
    </location>
</feature>
<feature type="region of interest" description="Disordered" evidence="4">
    <location>
        <begin position="542"/>
        <end position="576"/>
    </location>
</feature>
<feature type="region of interest" description="Disordered" evidence="4">
    <location>
        <begin position="609"/>
        <end position="630"/>
    </location>
</feature>
<feature type="region of interest" description="Disordered" evidence="4">
    <location>
        <begin position="650"/>
        <end position="684"/>
    </location>
</feature>
<feature type="region of interest" description="Disordered" evidence="4">
    <location>
        <begin position="758"/>
        <end position="823"/>
    </location>
</feature>
<feature type="compositionally biased region" description="Low complexity" evidence="4">
    <location>
        <begin position="8"/>
        <end position="25"/>
    </location>
</feature>
<feature type="compositionally biased region" description="Low complexity" evidence="4">
    <location>
        <begin position="561"/>
        <end position="575"/>
    </location>
</feature>
<feature type="compositionally biased region" description="Polar residues" evidence="4">
    <location>
        <begin position="650"/>
        <end position="664"/>
    </location>
</feature>
<feature type="compositionally biased region" description="Polar residues" evidence="4">
    <location>
        <begin position="673"/>
        <end position="684"/>
    </location>
</feature>
<feature type="compositionally biased region" description="Basic and acidic residues" evidence="4">
    <location>
        <begin position="781"/>
        <end position="809"/>
    </location>
</feature>
<feature type="modified residue" description="N6-acetyllysine" evidence="11">
    <location>
        <position position="30"/>
    </location>
</feature>
<feature type="modified residue" description="N6-acetyllysine" evidence="11">
    <location>
        <position position="32"/>
    </location>
</feature>
<feature type="modified residue" description="Phosphoserine" evidence="9 12 15">
    <location>
        <position position="85"/>
    </location>
</feature>
<feature type="modified residue" description="Phosphoserine" evidence="8 9 13 14 15">
    <location>
        <position position="566"/>
    </location>
</feature>
<feature type="modified residue" description="N6-acetyllysine" evidence="1">
    <location>
        <position position="601"/>
    </location>
</feature>
<feature type="modified residue" description="Phosphoserine" evidence="15">
    <location>
        <position position="608"/>
    </location>
</feature>
<feature type="modified residue" description="N6-acetyllysine" evidence="11">
    <location>
        <position position="638"/>
    </location>
</feature>
<feature type="modified residue" description="N6-acetyllysine" evidence="1">
    <location>
        <position position="735"/>
    </location>
</feature>
<feature type="modified residue" description="Phosphoserine" evidence="10">
    <location>
        <position position="774"/>
    </location>
</feature>
<feature type="modified residue" description="Phosphoserine" evidence="10">
    <location>
        <position position="776"/>
    </location>
</feature>
<feature type="modified residue" description="Phosphoserine" evidence="10">
    <location>
        <position position="780"/>
    </location>
</feature>
<comment type="function">
    <text evidence="6">Scaffold subunit of some HBO1 complexes, which have a histone H4 acetyltransferase activity.</text>
</comment>
<comment type="subunit">
    <text evidence="6">Component of the HBO1 complex composed at least of ING4 or ING5, KAT7/HBO1, MEAF6, and one of JADE1, JADE2 and JADE3.</text>
</comment>
<comment type="interaction">
    <interactant intactId="EBI-10278909">
        <id>Q92613</id>
    </interactant>
    <interactant intactId="EBI-718729">
        <id>P55212</id>
        <label>CASP6</label>
    </interactant>
    <organismsDiffer>false</organismsDiffer>
    <experiments>3</experiments>
</comment>
<comment type="interaction">
    <interactant intactId="EBI-10278909">
        <id>Q92613</id>
    </interactant>
    <interactant intactId="EBI-750300">
        <id>Q01658</id>
        <label>DR1</label>
    </interactant>
    <organismsDiffer>false</organismsDiffer>
    <experiments>3</experiments>
</comment>
<comment type="interaction">
    <interactant intactId="EBI-10278909">
        <id>Q92613</id>
    </interactant>
    <interactant intactId="EBI-744302">
        <id>P14136</id>
        <label>GFAP</label>
    </interactant>
    <organismsDiffer>false</organismsDiffer>
    <experiments>3</experiments>
</comment>
<comment type="interaction">
    <interactant intactId="EBI-10278909">
        <id>Q92613</id>
    </interactant>
    <interactant intactId="EBI-389564">
        <id>Q00403</id>
        <label>GTF2B</label>
    </interactant>
    <organismsDiffer>false</organismsDiffer>
    <experiments>3</experiments>
</comment>
<comment type="interaction">
    <interactant intactId="EBI-10278909">
        <id>Q92613</id>
    </interactant>
    <interactant intactId="EBI-21591415">
        <id>P13473-2</id>
        <label>LAMP2</label>
    </interactant>
    <organismsDiffer>false</organismsDiffer>
    <experiments>3</experiments>
</comment>
<comment type="interaction">
    <interactant intactId="EBI-10278909">
        <id>Q92613</id>
    </interactant>
    <interactant intactId="EBI-739552">
        <id>P43364</id>
        <label>MAGEA11</label>
    </interactant>
    <organismsDiffer>false</organismsDiffer>
    <experiments>4</experiments>
</comment>
<comment type="interaction">
    <interactant intactId="EBI-10278909">
        <id>Q92613</id>
    </interactant>
    <interactant intactId="EBI-10178634">
        <id>P43364-2</id>
        <label>MAGEA11</label>
    </interactant>
    <organismsDiffer>false</organismsDiffer>
    <experiments>3</experiments>
</comment>
<comment type="interaction">
    <interactant intactId="EBI-10278909">
        <id>Q92613</id>
    </interactant>
    <interactant intactId="EBI-713665">
        <id>P19404</id>
        <label>NDUFV2</label>
    </interactant>
    <organismsDiffer>false</organismsDiffer>
    <experiments>3</experiments>
</comment>
<comment type="interaction">
    <interactant intactId="EBI-10278909">
        <id>Q92613</id>
    </interactant>
    <interactant intactId="EBI-372899">
        <id>Q13148</id>
        <label>TARDBP</label>
    </interactant>
    <organismsDiffer>false</organismsDiffer>
    <experiments>6</experiments>
</comment>
<comment type="tissue specificity">
    <text evidence="5">Ubiquitously expressed, with highest levels in placenta and uterus.</text>
</comment>
<comment type="induction">
    <text evidence="5">By estradiol in estrogen-responsive breast cancer cells.</text>
</comment>
<comment type="similarity">
    <text evidence="7">Belongs to the JADE family.</text>
</comment>
<comment type="sequence caution" evidence="7">
    <conflict type="erroneous initiation">
        <sequence resource="EMBL-CDS" id="BAA13205"/>
    </conflict>
</comment>
<evidence type="ECO:0000250" key="1">
    <source>
        <dbReference type="UniProtKB" id="Q6IE82"/>
    </source>
</evidence>
<evidence type="ECO:0000255" key="2">
    <source>
        <dbReference type="PROSITE-ProRule" id="PRU00146"/>
    </source>
</evidence>
<evidence type="ECO:0000255" key="3">
    <source>
        <dbReference type="PROSITE-ProRule" id="PRU01146"/>
    </source>
</evidence>
<evidence type="ECO:0000256" key="4">
    <source>
        <dbReference type="SAM" id="MobiDB-lite"/>
    </source>
</evidence>
<evidence type="ECO:0000269" key="5">
    <source>
    </source>
</evidence>
<evidence type="ECO:0000269" key="6">
    <source>
    </source>
</evidence>
<evidence type="ECO:0000305" key="7"/>
<evidence type="ECO:0007744" key="8">
    <source>
    </source>
</evidence>
<evidence type="ECO:0007744" key="9">
    <source>
    </source>
</evidence>
<evidence type="ECO:0007744" key="10">
    <source>
    </source>
</evidence>
<evidence type="ECO:0007744" key="11">
    <source>
    </source>
</evidence>
<evidence type="ECO:0007744" key="12">
    <source>
    </source>
</evidence>
<evidence type="ECO:0007744" key="13">
    <source>
    </source>
</evidence>
<evidence type="ECO:0007744" key="14">
    <source>
    </source>
</evidence>
<evidence type="ECO:0007744" key="15">
    <source>
    </source>
</evidence>
<sequence length="823" mass="93808">MKRHRPVSSSDSSDESPSTSFTSGSMYRIKSKIPNEHKKPAEVFRKDLISAMKLPDSHHINPDSYYLFADTWKEEWEKGVQVPASPDTVPQPSLRIIAEKVKDVLFIRPRKYIHCSSPDTTEPGYINIMELAASVCRYDLDDMDIFWLQELNEDLAEMGCGPVDENLMEKTVEVLERHCHENMNHAIETEEGLGIEYDEDVICDVCRSPDSEEGNDMVFCDKCNVCVHQACYGILKVPEGSWLCRSCVLGIYPQCVLCPKKGGALKTTKTGTKWAHVSCALWIPEVSIACPERMEPITKISHIPPSRWALVCNLCKLKTGACIQCSIKSCITAFHVTCAFEHGLEMKTILDEGDEVKFKSYCLKHSQNRQKLGEAEYPHHRAKEQSQAKSEKTSLRAQKLRELEEEFYSLVRVEDVAAELGMPTLAVDFIYNYWKLKRKSNFNKPLFPPKEDEENGLVQPKEESIHTRMRMFMHLRQDLERVRNLCYMISRREKLKLSHNKIQEQIFGLQVQLLNQEIDAGLPLTNALENSLFYPPPRITLKLKMPKSTPEDHRNSSTETDQQPHSPDSSSSVHSIRNMQVPQESLEMRTKSYPRYPLESKNNRLLASLSHSRSEAKESSPAWRTPSSECYHGQSLGKPLVLQAALHGQSSIGNGKSQPNSKFAKSNGLEGSWSGNVTQKDSSSEMFCDQEPVFSPHLVSQGSFRKSTVEHFSRSFKETTNRWVKNTEDLQCYVKPTKNMSPKEQFWGRQVLRRSAGRAPYQENDGYCPDLELSDSEAESDGNKEKVRVRKDSSDRENPPHDSRRDCHGKSKTHPLSHSSMQR</sequence>